<keyword id="KW-0963">Cytoplasm</keyword>
<keyword id="KW-0648">Protein biosynthesis</keyword>
<keyword id="KW-1185">Reference proteome</keyword>
<comment type="function">
    <text evidence="1">Responsible for the release of ribosomes from messenger RNA at the termination of protein biosynthesis. May increase the efficiency of translation by recycling ribosomes from one round of translation to another.</text>
</comment>
<comment type="subcellular location">
    <subcellularLocation>
        <location evidence="1">Cytoplasm</location>
    </subcellularLocation>
</comment>
<comment type="similarity">
    <text evidence="1">Belongs to the RRF family.</text>
</comment>
<accession>A8EX12</accession>
<gene>
    <name evidence="1" type="primary">frr</name>
    <name type="ordered locus">Abu_2277</name>
</gene>
<feature type="chain" id="PRO_1000194891" description="Ribosome-recycling factor">
    <location>
        <begin position="1"/>
        <end position="185"/>
    </location>
</feature>
<reference key="1">
    <citation type="journal article" date="2007" name="PLoS ONE">
        <title>The complete genome sequence and analysis of the Epsilonproteobacterium Arcobacter butzleri.</title>
        <authorList>
            <person name="Miller W.G."/>
            <person name="Parker C.T."/>
            <person name="Rubenfield M."/>
            <person name="Mendz G.L."/>
            <person name="Woesten M.M.S.M."/>
            <person name="Ussery D.W."/>
            <person name="Stolz J.F."/>
            <person name="Binnewies T.T."/>
            <person name="Hallin P.F."/>
            <person name="Wang G."/>
            <person name="Malek J.A."/>
            <person name="Rogosin A."/>
            <person name="Stanker L.H."/>
            <person name="Mandrell R.E."/>
        </authorList>
    </citation>
    <scope>NUCLEOTIDE SEQUENCE [LARGE SCALE GENOMIC DNA]</scope>
    <source>
        <strain>RM4018</strain>
    </source>
</reference>
<protein>
    <recommendedName>
        <fullName evidence="1">Ribosome-recycling factor</fullName>
        <shortName evidence="1">RRF</shortName>
    </recommendedName>
    <alternativeName>
        <fullName evidence="1">Ribosome-releasing factor</fullName>
    </alternativeName>
</protein>
<proteinExistence type="inferred from homology"/>
<sequence>MLQEVYAQTKEHMEKSIEALKKDYKSLRTGKVNTNILDGIKVDYYGTMTDLSQVGSVLATDATTITINPWEKNLLGTIEKAIQNANIGVNPNNDGQIIKLFFPPMTVEQRQETAKHAKTMTDNAKVAIRNIRQNSNNKVKTLLKDKAITEDESKKAQDEIQKITDSYVLKADETLKAKEKEILTV</sequence>
<evidence type="ECO:0000255" key="1">
    <source>
        <dbReference type="HAMAP-Rule" id="MF_00040"/>
    </source>
</evidence>
<name>RRF_ALIB4</name>
<organism>
    <name type="scientific">Aliarcobacter butzleri (strain RM4018)</name>
    <name type="common">Arcobacter butzleri</name>
    <dbReference type="NCBI Taxonomy" id="367737"/>
    <lineage>
        <taxon>Bacteria</taxon>
        <taxon>Pseudomonadati</taxon>
        <taxon>Campylobacterota</taxon>
        <taxon>Epsilonproteobacteria</taxon>
        <taxon>Campylobacterales</taxon>
        <taxon>Arcobacteraceae</taxon>
        <taxon>Aliarcobacter</taxon>
    </lineage>
</organism>
<dbReference type="EMBL" id="CP000361">
    <property type="protein sequence ID" value="ABV68485.1"/>
    <property type="molecule type" value="Genomic_DNA"/>
</dbReference>
<dbReference type="RefSeq" id="WP_004509969.1">
    <property type="nucleotide sequence ID" value="NC_009850.1"/>
</dbReference>
<dbReference type="SMR" id="A8EX12"/>
<dbReference type="STRING" id="367737.Abu_2277"/>
<dbReference type="GeneID" id="24305524"/>
<dbReference type="KEGG" id="abu:Abu_2277"/>
<dbReference type="eggNOG" id="COG0233">
    <property type="taxonomic scope" value="Bacteria"/>
</dbReference>
<dbReference type="HOGENOM" id="CLU_073981_2_0_7"/>
<dbReference type="Proteomes" id="UP000001136">
    <property type="component" value="Chromosome"/>
</dbReference>
<dbReference type="GO" id="GO:0005829">
    <property type="term" value="C:cytosol"/>
    <property type="evidence" value="ECO:0007669"/>
    <property type="project" value="GOC"/>
</dbReference>
<dbReference type="GO" id="GO:0043023">
    <property type="term" value="F:ribosomal large subunit binding"/>
    <property type="evidence" value="ECO:0007669"/>
    <property type="project" value="TreeGrafter"/>
</dbReference>
<dbReference type="GO" id="GO:0002184">
    <property type="term" value="P:cytoplasmic translational termination"/>
    <property type="evidence" value="ECO:0007669"/>
    <property type="project" value="TreeGrafter"/>
</dbReference>
<dbReference type="CDD" id="cd00520">
    <property type="entry name" value="RRF"/>
    <property type="match status" value="1"/>
</dbReference>
<dbReference type="FunFam" id="1.10.132.20:FF:000001">
    <property type="entry name" value="Ribosome-recycling factor"/>
    <property type="match status" value="1"/>
</dbReference>
<dbReference type="FunFam" id="3.30.1360.40:FF:000001">
    <property type="entry name" value="Ribosome-recycling factor"/>
    <property type="match status" value="1"/>
</dbReference>
<dbReference type="Gene3D" id="3.30.1360.40">
    <property type="match status" value="1"/>
</dbReference>
<dbReference type="Gene3D" id="1.10.132.20">
    <property type="entry name" value="Ribosome-recycling factor"/>
    <property type="match status" value="1"/>
</dbReference>
<dbReference type="HAMAP" id="MF_00040">
    <property type="entry name" value="RRF"/>
    <property type="match status" value="1"/>
</dbReference>
<dbReference type="InterPro" id="IPR002661">
    <property type="entry name" value="Ribosome_recyc_fac"/>
</dbReference>
<dbReference type="InterPro" id="IPR023584">
    <property type="entry name" value="Ribosome_recyc_fac_dom"/>
</dbReference>
<dbReference type="InterPro" id="IPR036191">
    <property type="entry name" value="RRF_sf"/>
</dbReference>
<dbReference type="NCBIfam" id="TIGR00496">
    <property type="entry name" value="frr"/>
    <property type="match status" value="1"/>
</dbReference>
<dbReference type="PANTHER" id="PTHR20982:SF3">
    <property type="entry name" value="MITOCHONDRIAL RIBOSOME RECYCLING FACTOR PSEUDO 1"/>
    <property type="match status" value="1"/>
</dbReference>
<dbReference type="PANTHER" id="PTHR20982">
    <property type="entry name" value="RIBOSOME RECYCLING FACTOR"/>
    <property type="match status" value="1"/>
</dbReference>
<dbReference type="Pfam" id="PF01765">
    <property type="entry name" value="RRF"/>
    <property type="match status" value="1"/>
</dbReference>
<dbReference type="SUPFAM" id="SSF55194">
    <property type="entry name" value="Ribosome recycling factor, RRF"/>
    <property type="match status" value="1"/>
</dbReference>